<protein>
    <recommendedName>
        <fullName evidence="1">Carboxy-S-adenosyl-L-methionine synthase</fullName>
        <shortName evidence="1">Cx-SAM synthase</shortName>
        <ecNumber evidence="1">2.1.3.-</ecNumber>
    </recommendedName>
</protein>
<accession>Q9ZKE5</accession>
<keyword id="KW-0949">S-adenosyl-L-methionine</keyword>
<keyword id="KW-0808">Transferase</keyword>
<organism>
    <name type="scientific">Helicobacter pylori (strain J99 / ATCC 700824)</name>
    <name type="common">Campylobacter pylori J99</name>
    <dbReference type="NCBI Taxonomy" id="85963"/>
    <lineage>
        <taxon>Bacteria</taxon>
        <taxon>Pseudomonadati</taxon>
        <taxon>Campylobacterota</taxon>
        <taxon>Epsilonproteobacteria</taxon>
        <taxon>Campylobacterales</taxon>
        <taxon>Helicobacteraceae</taxon>
        <taxon>Helicobacter</taxon>
    </lineage>
</organism>
<dbReference type="EC" id="2.1.3.-" evidence="1"/>
<dbReference type="EMBL" id="AE001439">
    <property type="protein sequence ID" value="AAD06570.1"/>
    <property type="molecule type" value="Genomic_DNA"/>
</dbReference>
<dbReference type="PIR" id="F71861">
    <property type="entry name" value="F71861"/>
</dbReference>
<dbReference type="RefSeq" id="WP_000655559.1">
    <property type="nucleotide sequence ID" value="NC_000921.1"/>
</dbReference>
<dbReference type="SMR" id="Q9ZKE5"/>
<dbReference type="KEGG" id="hpj:jhp_0993"/>
<dbReference type="PATRIC" id="fig|85963.30.peg.1598"/>
<dbReference type="eggNOG" id="COG2226">
    <property type="taxonomic scope" value="Bacteria"/>
</dbReference>
<dbReference type="Proteomes" id="UP000000804">
    <property type="component" value="Chromosome"/>
</dbReference>
<dbReference type="GO" id="GO:0016743">
    <property type="term" value="F:carboxyl- or carbamoyltransferase activity"/>
    <property type="evidence" value="ECO:0007669"/>
    <property type="project" value="UniProtKB-UniRule"/>
</dbReference>
<dbReference type="GO" id="GO:1904047">
    <property type="term" value="F:S-adenosyl-L-methionine binding"/>
    <property type="evidence" value="ECO:0007669"/>
    <property type="project" value="UniProtKB-UniRule"/>
</dbReference>
<dbReference type="GO" id="GO:0002098">
    <property type="term" value="P:tRNA wobble uridine modification"/>
    <property type="evidence" value="ECO:0007669"/>
    <property type="project" value="InterPro"/>
</dbReference>
<dbReference type="CDD" id="cd02440">
    <property type="entry name" value="AdoMet_MTases"/>
    <property type="match status" value="1"/>
</dbReference>
<dbReference type="FunFam" id="3.40.50.150:FF:000474">
    <property type="entry name" value="Carboxy-S-adenosyl-L-methionine synthase"/>
    <property type="match status" value="1"/>
</dbReference>
<dbReference type="Gene3D" id="3.40.50.150">
    <property type="entry name" value="Vaccinia Virus protein VP39"/>
    <property type="match status" value="1"/>
</dbReference>
<dbReference type="HAMAP" id="MF_01589">
    <property type="entry name" value="Cx_SAM_synthase"/>
    <property type="match status" value="1"/>
</dbReference>
<dbReference type="InterPro" id="IPR005271">
    <property type="entry name" value="CmoA"/>
</dbReference>
<dbReference type="InterPro" id="IPR041698">
    <property type="entry name" value="Methyltransf_25"/>
</dbReference>
<dbReference type="InterPro" id="IPR029063">
    <property type="entry name" value="SAM-dependent_MTases_sf"/>
</dbReference>
<dbReference type="NCBIfam" id="TIGR00740">
    <property type="entry name" value="carboxy-S-adenosyl-L-methionine synthase CmoA"/>
    <property type="match status" value="1"/>
</dbReference>
<dbReference type="PANTHER" id="PTHR43861:SF2">
    <property type="entry name" value="CARBOXY-S-ADENOSYL-L-METHIONINE SYNTHASE"/>
    <property type="match status" value="1"/>
</dbReference>
<dbReference type="PANTHER" id="PTHR43861">
    <property type="entry name" value="TRANS-ACONITATE 2-METHYLTRANSFERASE-RELATED"/>
    <property type="match status" value="1"/>
</dbReference>
<dbReference type="Pfam" id="PF13649">
    <property type="entry name" value="Methyltransf_25"/>
    <property type="match status" value="1"/>
</dbReference>
<dbReference type="PIRSF" id="PIRSF006325">
    <property type="entry name" value="MeTrfase_bac"/>
    <property type="match status" value="1"/>
</dbReference>
<dbReference type="SUPFAM" id="SSF53335">
    <property type="entry name" value="S-adenosyl-L-methionine-dependent methyltransferases"/>
    <property type="match status" value="1"/>
</dbReference>
<reference key="1">
    <citation type="journal article" date="1999" name="Nature">
        <title>Genomic sequence comparison of two unrelated isolates of the human gastric pathogen Helicobacter pylori.</title>
        <authorList>
            <person name="Alm R.A."/>
            <person name="Ling L.-S.L."/>
            <person name="Moir D.T."/>
            <person name="King B.L."/>
            <person name="Brown E.D."/>
            <person name="Doig P.C."/>
            <person name="Smith D.R."/>
            <person name="Noonan B."/>
            <person name="Guild B.C."/>
            <person name="deJonge B.L."/>
            <person name="Carmel G."/>
            <person name="Tummino P.J."/>
            <person name="Caruso A."/>
            <person name="Uria-Nickelsen M."/>
            <person name="Mills D.M."/>
            <person name="Ives C."/>
            <person name="Gibson R."/>
            <person name="Merberg D."/>
            <person name="Mills S.D."/>
            <person name="Jiang Q."/>
            <person name="Taylor D.E."/>
            <person name="Vovis G.F."/>
            <person name="Trust T.J."/>
        </authorList>
    </citation>
    <scope>NUCLEOTIDE SEQUENCE [LARGE SCALE GENOMIC DNA]</scope>
    <source>
        <strain>J99 / ATCC 700824</strain>
    </source>
</reference>
<evidence type="ECO:0000255" key="1">
    <source>
        <dbReference type="HAMAP-Rule" id="MF_01589"/>
    </source>
</evidence>
<sequence>MKDTLFNESLNKRFCFDEKVAHVFDDMLERSIPYYHEMLNLGAYFIAQNLKENVYHKSLPKPLIYDLGCSTGNFFIALNQQIQQDIELVGIDNSMPMLKKAQEKLKDFNNVRFECMDFLEVKFKEASAFSLLFVLQFVRPMQREVLLKKIYNSLALNGVLLVGEKIMSEDRILDKQMIELYYLYKQNQGYSHNEIAFKREALENVLVPYSLKENIALLESVGFKHVEALFKWVNFTLLVARKT</sequence>
<feature type="chain" id="PRO_0000314342" description="Carboxy-S-adenosyl-L-methionine synthase">
    <location>
        <begin position="1"/>
        <end position="243"/>
    </location>
</feature>
<feature type="binding site" evidence="1">
    <location>
        <position position="35"/>
    </location>
    <ligand>
        <name>S-adenosyl-L-methionine</name>
        <dbReference type="ChEBI" id="CHEBI:59789"/>
    </ligand>
</feature>
<feature type="binding site" evidence="1">
    <location>
        <begin position="68"/>
        <end position="70"/>
    </location>
    <ligand>
        <name>S-adenosyl-L-methionine</name>
        <dbReference type="ChEBI" id="CHEBI:59789"/>
    </ligand>
</feature>
<feature type="binding site" evidence="1">
    <location>
        <begin position="92"/>
        <end position="93"/>
    </location>
    <ligand>
        <name>S-adenosyl-L-methionine</name>
        <dbReference type="ChEBI" id="CHEBI:59789"/>
    </ligand>
</feature>
<feature type="binding site" evidence="1">
    <location>
        <position position="199"/>
    </location>
    <ligand>
        <name>S-adenosyl-L-methionine</name>
        <dbReference type="ChEBI" id="CHEBI:59789"/>
    </ligand>
</feature>
<name>CMOA_HELPJ</name>
<gene>
    <name evidence="1" type="primary">cmoA</name>
    <name type="ordered locus">jhp_0993</name>
</gene>
<comment type="function">
    <text evidence="1">Catalyzes the conversion of S-adenosyl-L-methionine (SAM) to carboxy-S-adenosyl-L-methionine (Cx-SAM).</text>
</comment>
<comment type="catalytic activity">
    <reaction evidence="1">
        <text>prephenate + S-adenosyl-L-methionine = carboxy-S-adenosyl-L-methionine + 3-phenylpyruvate + H2O</text>
        <dbReference type="Rhea" id="RHEA:51692"/>
        <dbReference type="ChEBI" id="CHEBI:15377"/>
        <dbReference type="ChEBI" id="CHEBI:18005"/>
        <dbReference type="ChEBI" id="CHEBI:29934"/>
        <dbReference type="ChEBI" id="CHEBI:59789"/>
        <dbReference type="ChEBI" id="CHEBI:134278"/>
    </reaction>
</comment>
<comment type="subunit">
    <text evidence="1">Homodimer.</text>
</comment>
<comment type="similarity">
    <text evidence="1">Belongs to the class I-like SAM-binding methyltransferase superfamily. Cx-SAM synthase family.</text>
</comment>
<proteinExistence type="inferred from homology"/>